<feature type="chain" id="PRO_1000166780" description="Small ribosomal subunit protein uS14">
    <location>
        <begin position="1"/>
        <end position="61"/>
    </location>
</feature>
<feature type="binding site" evidence="1">
    <location>
        <position position="24"/>
    </location>
    <ligand>
        <name>Zn(2+)</name>
        <dbReference type="ChEBI" id="CHEBI:29105"/>
    </ligand>
</feature>
<feature type="binding site" evidence="1">
    <location>
        <position position="27"/>
    </location>
    <ligand>
        <name>Zn(2+)</name>
        <dbReference type="ChEBI" id="CHEBI:29105"/>
    </ligand>
</feature>
<feature type="binding site" evidence="1">
    <location>
        <position position="40"/>
    </location>
    <ligand>
        <name>Zn(2+)</name>
        <dbReference type="ChEBI" id="CHEBI:29105"/>
    </ligand>
</feature>
<feature type="binding site" evidence="1">
    <location>
        <position position="43"/>
    </location>
    <ligand>
        <name>Zn(2+)</name>
        <dbReference type="ChEBI" id="CHEBI:29105"/>
    </ligand>
</feature>
<sequence length="61" mass="7099">MAKKSMIAKNKRPAKYSTQAYTRCEKCGRPHSVYRKFKLCRVCFRELAYKGQIPGVVKASW</sequence>
<name>RS14Z_STRE4</name>
<dbReference type="EMBL" id="FM204883">
    <property type="protein sequence ID" value="CAW91991.1"/>
    <property type="molecule type" value="Genomic_DNA"/>
</dbReference>
<dbReference type="RefSeq" id="WP_012514742.1">
    <property type="nucleotide sequence ID" value="NC_012471.1"/>
</dbReference>
<dbReference type="SMR" id="C0M9Z1"/>
<dbReference type="KEGG" id="seu:SEQ_0068"/>
<dbReference type="HOGENOM" id="CLU_139869_3_0_9"/>
<dbReference type="OrthoDB" id="9810484at2"/>
<dbReference type="Proteomes" id="UP000001365">
    <property type="component" value="Chromosome"/>
</dbReference>
<dbReference type="GO" id="GO:0015935">
    <property type="term" value="C:small ribosomal subunit"/>
    <property type="evidence" value="ECO:0007669"/>
    <property type="project" value="TreeGrafter"/>
</dbReference>
<dbReference type="GO" id="GO:0019843">
    <property type="term" value="F:rRNA binding"/>
    <property type="evidence" value="ECO:0007669"/>
    <property type="project" value="UniProtKB-UniRule"/>
</dbReference>
<dbReference type="GO" id="GO:0003735">
    <property type="term" value="F:structural constituent of ribosome"/>
    <property type="evidence" value="ECO:0007669"/>
    <property type="project" value="InterPro"/>
</dbReference>
<dbReference type="GO" id="GO:0008270">
    <property type="term" value="F:zinc ion binding"/>
    <property type="evidence" value="ECO:0007669"/>
    <property type="project" value="UniProtKB-UniRule"/>
</dbReference>
<dbReference type="GO" id="GO:0006412">
    <property type="term" value="P:translation"/>
    <property type="evidence" value="ECO:0007669"/>
    <property type="project" value="UniProtKB-UniRule"/>
</dbReference>
<dbReference type="FunFam" id="4.10.830.10:FF:000001">
    <property type="entry name" value="30S ribosomal protein S14 type Z"/>
    <property type="match status" value="1"/>
</dbReference>
<dbReference type="Gene3D" id="4.10.830.10">
    <property type="entry name" value="30s Ribosomal Protein S14, Chain N"/>
    <property type="match status" value="1"/>
</dbReference>
<dbReference type="HAMAP" id="MF_01364_B">
    <property type="entry name" value="Ribosomal_uS14_2_B"/>
    <property type="match status" value="1"/>
</dbReference>
<dbReference type="InterPro" id="IPR001209">
    <property type="entry name" value="Ribosomal_uS14"/>
</dbReference>
<dbReference type="InterPro" id="IPR023053">
    <property type="entry name" value="Ribosomal_uS14_bact"/>
</dbReference>
<dbReference type="InterPro" id="IPR018271">
    <property type="entry name" value="Ribosomal_uS14_CS"/>
</dbReference>
<dbReference type="InterPro" id="IPR043140">
    <property type="entry name" value="Ribosomal_uS14_sf"/>
</dbReference>
<dbReference type="NCBIfam" id="NF005974">
    <property type="entry name" value="PRK08061.1"/>
    <property type="match status" value="1"/>
</dbReference>
<dbReference type="PANTHER" id="PTHR19836">
    <property type="entry name" value="30S RIBOSOMAL PROTEIN S14"/>
    <property type="match status" value="1"/>
</dbReference>
<dbReference type="PANTHER" id="PTHR19836:SF26">
    <property type="entry name" value="SMALL RIBOSOMAL SUBUNIT PROTEIN US14B"/>
    <property type="match status" value="1"/>
</dbReference>
<dbReference type="Pfam" id="PF00253">
    <property type="entry name" value="Ribosomal_S14"/>
    <property type="match status" value="1"/>
</dbReference>
<dbReference type="SUPFAM" id="SSF57716">
    <property type="entry name" value="Glucocorticoid receptor-like (DNA-binding domain)"/>
    <property type="match status" value="1"/>
</dbReference>
<dbReference type="PROSITE" id="PS00527">
    <property type="entry name" value="RIBOSOMAL_S14"/>
    <property type="match status" value="1"/>
</dbReference>
<organism>
    <name type="scientific">Streptococcus equi subsp. equi (strain 4047)</name>
    <dbReference type="NCBI Taxonomy" id="553482"/>
    <lineage>
        <taxon>Bacteria</taxon>
        <taxon>Bacillati</taxon>
        <taxon>Bacillota</taxon>
        <taxon>Bacilli</taxon>
        <taxon>Lactobacillales</taxon>
        <taxon>Streptococcaceae</taxon>
        <taxon>Streptococcus</taxon>
    </lineage>
</organism>
<gene>
    <name evidence="1" type="primary">rpsZ</name>
    <name evidence="1" type="synonym">rpsN</name>
    <name type="ordered locus">SEQ_0068</name>
</gene>
<proteinExistence type="inferred from homology"/>
<reference key="1">
    <citation type="journal article" date="2009" name="PLoS Pathog.">
        <title>Genomic evidence for the evolution of Streptococcus equi: host restriction, increased virulence, and genetic exchange with human pathogens.</title>
        <authorList>
            <person name="Holden M.T.G."/>
            <person name="Heather Z."/>
            <person name="Paillot R."/>
            <person name="Steward K.F."/>
            <person name="Webb K."/>
            <person name="Ainslie F."/>
            <person name="Jourdan T."/>
            <person name="Bason N.C."/>
            <person name="Holroyd N.E."/>
            <person name="Mungall K."/>
            <person name="Quail M.A."/>
            <person name="Sanders M."/>
            <person name="Simmonds M."/>
            <person name="Willey D."/>
            <person name="Brooks K."/>
            <person name="Aanensen D.M."/>
            <person name="Spratt B.G."/>
            <person name="Jolley K.A."/>
            <person name="Maiden M.C.J."/>
            <person name="Kehoe M."/>
            <person name="Chanter N."/>
            <person name="Bentley S.D."/>
            <person name="Robinson C."/>
            <person name="Maskell D.J."/>
            <person name="Parkhill J."/>
            <person name="Waller A.S."/>
        </authorList>
    </citation>
    <scope>NUCLEOTIDE SEQUENCE [LARGE SCALE GENOMIC DNA]</scope>
    <source>
        <strain>4047</strain>
    </source>
</reference>
<comment type="function">
    <text evidence="1">Binds 16S rRNA, required for the assembly of 30S particles and may also be responsible for determining the conformation of the 16S rRNA at the A site.</text>
</comment>
<comment type="cofactor">
    <cofactor evidence="1">
        <name>Zn(2+)</name>
        <dbReference type="ChEBI" id="CHEBI:29105"/>
    </cofactor>
    <text evidence="1">Binds 1 zinc ion per subunit.</text>
</comment>
<comment type="subunit">
    <text evidence="1">Part of the 30S ribosomal subunit. Contacts proteins S3 and S10.</text>
</comment>
<comment type="similarity">
    <text evidence="1">Belongs to the universal ribosomal protein uS14 family. Zinc-binding uS14 subfamily.</text>
</comment>
<protein>
    <recommendedName>
        <fullName evidence="1">Small ribosomal subunit protein uS14</fullName>
    </recommendedName>
    <alternativeName>
        <fullName evidence="2">30S ribosomal protein S14 type Z</fullName>
    </alternativeName>
</protein>
<keyword id="KW-0479">Metal-binding</keyword>
<keyword id="KW-0687">Ribonucleoprotein</keyword>
<keyword id="KW-0689">Ribosomal protein</keyword>
<keyword id="KW-0694">RNA-binding</keyword>
<keyword id="KW-0699">rRNA-binding</keyword>
<keyword id="KW-0862">Zinc</keyword>
<accession>C0M9Z1</accession>
<evidence type="ECO:0000255" key="1">
    <source>
        <dbReference type="HAMAP-Rule" id="MF_01364"/>
    </source>
</evidence>
<evidence type="ECO:0000305" key="2"/>